<evidence type="ECO:0000255" key="1">
    <source>
        <dbReference type="HAMAP-Rule" id="MF_01346"/>
    </source>
</evidence>
<dbReference type="EC" id="7.1.2.2" evidence="1"/>
<dbReference type="EMBL" id="CP000749">
    <property type="protein sequence ID" value="ABR70885.1"/>
    <property type="molecule type" value="Genomic_DNA"/>
</dbReference>
<dbReference type="SMR" id="A6VWQ6"/>
<dbReference type="STRING" id="400668.Mmwyl1_1961"/>
<dbReference type="KEGG" id="mmw:Mmwyl1_1961"/>
<dbReference type="eggNOG" id="COG0056">
    <property type="taxonomic scope" value="Bacteria"/>
</dbReference>
<dbReference type="HOGENOM" id="CLU_010091_2_1_6"/>
<dbReference type="OrthoDB" id="9803053at2"/>
<dbReference type="GO" id="GO:0005886">
    <property type="term" value="C:plasma membrane"/>
    <property type="evidence" value="ECO:0007669"/>
    <property type="project" value="UniProtKB-SubCell"/>
</dbReference>
<dbReference type="GO" id="GO:0045259">
    <property type="term" value="C:proton-transporting ATP synthase complex"/>
    <property type="evidence" value="ECO:0007669"/>
    <property type="project" value="UniProtKB-KW"/>
</dbReference>
<dbReference type="GO" id="GO:0043531">
    <property type="term" value="F:ADP binding"/>
    <property type="evidence" value="ECO:0007669"/>
    <property type="project" value="TreeGrafter"/>
</dbReference>
<dbReference type="GO" id="GO:0005524">
    <property type="term" value="F:ATP binding"/>
    <property type="evidence" value="ECO:0007669"/>
    <property type="project" value="UniProtKB-UniRule"/>
</dbReference>
<dbReference type="GO" id="GO:0046933">
    <property type="term" value="F:proton-transporting ATP synthase activity, rotational mechanism"/>
    <property type="evidence" value="ECO:0007669"/>
    <property type="project" value="UniProtKB-UniRule"/>
</dbReference>
<dbReference type="CDD" id="cd18113">
    <property type="entry name" value="ATP-synt_F1_alpha_C"/>
    <property type="match status" value="1"/>
</dbReference>
<dbReference type="CDD" id="cd18116">
    <property type="entry name" value="ATP-synt_F1_alpha_N"/>
    <property type="match status" value="1"/>
</dbReference>
<dbReference type="CDD" id="cd01132">
    <property type="entry name" value="F1-ATPase_alpha_CD"/>
    <property type="match status" value="1"/>
</dbReference>
<dbReference type="FunFam" id="3.40.50.300:FF:000002">
    <property type="entry name" value="ATP synthase subunit alpha"/>
    <property type="match status" value="1"/>
</dbReference>
<dbReference type="Gene3D" id="2.40.30.20">
    <property type="match status" value="1"/>
</dbReference>
<dbReference type="Gene3D" id="1.20.150.20">
    <property type="entry name" value="ATP synthase alpha/beta chain, C-terminal domain"/>
    <property type="match status" value="1"/>
</dbReference>
<dbReference type="Gene3D" id="3.40.50.300">
    <property type="entry name" value="P-loop containing nucleotide triphosphate hydrolases"/>
    <property type="match status" value="1"/>
</dbReference>
<dbReference type="HAMAP" id="MF_01346">
    <property type="entry name" value="ATP_synth_alpha_bact"/>
    <property type="match status" value="1"/>
</dbReference>
<dbReference type="InterPro" id="IPR017710">
    <property type="entry name" value="Alt_ATP_synth_F1_asu"/>
</dbReference>
<dbReference type="InterPro" id="IPR023366">
    <property type="entry name" value="ATP_synth_asu-like_sf"/>
</dbReference>
<dbReference type="InterPro" id="IPR000793">
    <property type="entry name" value="ATP_synth_asu_C"/>
</dbReference>
<dbReference type="InterPro" id="IPR038376">
    <property type="entry name" value="ATP_synth_asu_C_sf"/>
</dbReference>
<dbReference type="InterPro" id="IPR033732">
    <property type="entry name" value="ATP_synth_F1_a_nt-bd_dom"/>
</dbReference>
<dbReference type="InterPro" id="IPR005294">
    <property type="entry name" value="ATP_synth_F1_asu"/>
</dbReference>
<dbReference type="InterPro" id="IPR020003">
    <property type="entry name" value="ATPase_a/bsu_AS"/>
</dbReference>
<dbReference type="InterPro" id="IPR004100">
    <property type="entry name" value="ATPase_F1/V1/A1_a/bsu_N"/>
</dbReference>
<dbReference type="InterPro" id="IPR036121">
    <property type="entry name" value="ATPase_F1/V1/A1_a/bsu_N_sf"/>
</dbReference>
<dbReference type="InterPro" id="IPR000194">
    <property type="entry name" value="ATPase_F1/V1/A1_a/bsu_nucl-bd"/>
</dbReference>
<dbReference type="InterPro" id="IPR027417">
    <property type="entry name" value="P-loop_NTPase"/>
</dbReference>
<dbReference type="NCBIfam" id="TIGR03324">
    <property type="entry name" value="alt_F1F0_F1_al"/>
    <property type="match status" value="1"/>
</dbReference>
<dbReference type="NCBIfam" id="TIGR00962">
    <property type="entry name" value="atpA"/>
    <property type="match status" value="1"/>
</dbReference>
<dbReference type="NCBIfam" id="NF009884">
    <property type="entry name" value="PRK13343.1"/>
    <property type="match status" value="1"/>
</dbReference>
<dbReference type="PANTHER" id="PTHR48082">
    <property type="entry name" value="ATP SYNTHASE SUBUNIT ALPHA, MITOCHONDRIAL"/>
    <property type="match status" value="1"/>
</dbReference>
<dbReference type="PANTHER" id="PTHR48082:SF2">
    <property type="entry name" value="ATP SYNTHASE SUBUNIT ALPHA, MITOCHONDRIAL"/>
    <property type="match status" value="1"/>
</dbReference>
<dbReference type="Pfam" id="PF00006">
    <property type="entry name" value="ATP-synt_ab"/>
    <property type="match status" value="1"/>
</dbReference>
<dbReference type="Pfam" id="PF00306">
    <property type="entry name" value="ATP-synt_ab_C"/>
    <property type="match status" value="1"/>
</dbReference>
<dbReference type="Pfam" id="PF02874">
    <property type="entry name" value="ATP-synt_ab_N"/>
    <property type="match status" value="1"/>
</dbReference>
<dbReference type="SUPFAM" id="SSF47917">
    <property type="entry name" value="C-terminal domain of alpha and beta subunits of F1 ATP synthase"/>
    <property type="match status" value="1"/>
</dbReference>
<dbReference type="SUPFAM" id="SSF50615">
    <property type="entry name" value="N-terminal domain of alpha and beta subunits of F1 ATP synthase"/>
    <property type="match status" value="1"/>
</dbReference>
<dbReference type="SUPFAM" id="SSF52540">
    <property type="entry name" value="P-loop containing nucleoside triphosphate hydrolases"/>
    <property type="match status" value="1"/>
</dbReference>
<dbReference type="PROSITE" id="PS00152">
    <property type="entry name" value="ATPASE_ALPHA_BETA"/>
    <property type="match status" value="1"/>
</dbReference>
<keyword id="KW-0066">ATP synthesis</keyword>
<keyword id="KW-0067">ATP-binding</keyword>
<keyword id="KW-0997">Cell inner membrane</keyword>
<keyword id="KW-1003">Cell membrane</keyword>
<keyword id="KW-0139">CF(1)</keyword>
<keyword id="KW-0375">Hydrogen ion transport</keyword>
<keyword id="KW-0406">Ion transport</keyword>
<keyword id="KW-0472">Membrane</keyword>
<keyword id="KW-0547">Nucleotide-binding</keyword>
<keyword id="KW-1278">Translocase</keyword>
<keyword id="KW-0813">Transport</keyword>
<proteinExistence type="inferred from homology"/>
<comment type="function">
    <text evidence="1">Produces ATP from ADP in the presence of a proton gradient across the membrane. The alpha chain is a regulatory subunit.</text>
</comment>
<comment type="catalytic activity">
    <reaction evidence="1">
        <text>ATP + H2O + 4 H(+)(in) = ADP + phosphate + 5 H(+)(out)</text>
        <dbReference type="Rhea" id="RHEA:57720"/>
        <dbReference type="ChEBI" id="CHEBI:15377"/>
        <dbReference type="ChEBI" id="CHEBI:15378"/>
        <dbReference type="ChEBI" id="CHEBI:30616"/>
        <dbReference type="ChEBI" id="CHEBI:43474"/>
        <dbReference type="ChEBI" id="CHEBI:456216"/>
        <dbReference type="EC" id="7.1.2.2"/>
    </reaction>
</comment>
<comment type="subunit">
    <text evidence="1">F-type ATPases have 2 components, CF(1) - the catalytic core - and CF(0) - the membrane proton channel. CF(1) has five subunits: alpha(3), beta(3), gamma(1), delta(1), epsilon(1). CF(0) has three main subunits: a(1), b(2) and c(9-12). The alpha and beta chains form an alternating ring which encloses part of the gamma chain. CF(1) is attached to CF(0) by a central stalk formed by the gamma and epsilon chains, while a peripheral stalk is formed by the delta and b chains.</text>
</comment>
<comment type="subcellular location">
    <subcellularLocation>
        <location evidence="1">Cell inner membrane</location>
        <topology evidence="1">Peripheral membrane protein</topology>
    </subcellularLocation>
</comment>
<comment type="similarity">
    <text evidence="1">Belongs to the ATPase alpha/beta chains family.</text>
</comment>
<gene>
    <name evidence="1" type="primary">atpA1</name>
    <name type="ordered locus">Mmwyl1_1961</name>
</gene>
<protein>
    <recommendedName>
        <fullName evidence="1">ATP synthase subunit alpha 1</fullName>
        <ecNumber evidence="1">7.1.2.2</ecNumber>
    </recommendedName>
    <alternativeName>
        <fullName evidence="1">ATP synthase F1 sector subunit alpha 1</fullName>
    </alternativeName>
    <alternativeName>
        <fullName evidence="1">F-ATPase subunit alpha 1</fullName>
    </alternativeName>
</protein>
<reference key="1">
    <citation type="submission" date="2007-06" db="EMBL/GenBank/DDBJ databases">
        <title>Complete sequence of Marinomonas sp. MWYL1.</title>
        <authorList>
            <consortium name="US DOE Joint Genome Institute"/>
            <person name="Copeland A."/>
            <person name="Lucas S."/>
            <person name="Lapidus A."/>
            <person name="Barry K."/>
            <person name="Glavina del Rio T."/>
            <person name="Dalin E."/>
            <person name="Tice H."/>
            <person name="Pitluck S."/>
            <person name="Kiss H."/>
            <person name="Brettin T."/>
            <person name="Bruce D."/>
            <person name="Detter J.C."/>
            <person name="Han C."/>
            <person name="Schmutz J."/>
            <person name="Larimer F."/>
            <person name="Land M."/>
            <person name="Hauser L."/>
            <person name="Kyrpides N."/>
            <person name="Kim E."/>
            <person name="Johnston A.W.B."/>
            <person name="Todd J.D."/>
            <person name="Rogers R."/>
            <person name="Wexler M."/>
            <person name="Bond P.L."/>
            <person name="Li Y."/>
            <person name="Richardson P."/>
        </authorList>
    </citation>
    <scope>NUCLEOTIDE SEQUENCE [LARGE SCALE GENOMIC DNA]</scope>
    <source>
        <strain>MWYL1</strain>
    </source>
</reference>
<organism>
    <name type="scientific">Marinomonas sp. (strain MWYL1)</name>
    <dbReference type="NCBI Taxonomy" id="400668"/>
    <lineage>
        <taxon>Bacteria</taxon>
        <taxon>Pseudomonadati</taxon>
        <taxon>Pseudomonadota</taxon>
        <taxon>Gammaproteobacteria</taxon>
        <taxon>Oceanospirillales</taxon>
        <taxon>Oceanospirillaceae</taxon>
        <taxon>Marinomonas</taxon>
    </lineage>
</organism>
<feature type="chain" id="PRO_0000339039" description="ATP synthase subunit alpha 1">
    <location>
        <begin position="1"/>
        <end position="510"/>
    </location>
</feature>
<feature type="binding site" evidence="1">
    <location>
        <begin position="169"/>
        <end position="176"/>
    </location>
    <ligand>
        <name>ATP</name>
        <dbReference type="ChEBI" id="CHEBI:30616"/>
    </ligand>
</feature>
<feature type="site" description="Required for activity" evidence="1">
    <location>
        <position position="362"/>
    </location>
</feature>
<sequence length="510" mass="55405">MMSMFDGLFADLKQARESFEPALSPREIGKITSVATGIAKVSGLPNVGYDELLLFPGDIYGIAFNVDEDEIGVVLLGEYWHLQAGDEVERLGHVVDVPVGDSLIGRIINPIGKPLDGKGNLGTTERLPIERPSPAIMDRAGVSVPLQTGIKVIDALIPVGRGQRELILGDRQTGKTAIAMDTILNQRGKNVLCVYCAIGQRASGVAKVIATLREQGAMEYTVVVVTEGNEPPGLAYVAPYAATSIAEYFMEQGRDVLIVYDDLTHHARAYRELSLLLRRPPGREAFPGDIFYIHSRLLERATHLSKELGGGSLTALPIIETEAQDISAYIPTNLISITDGQIYLSPALFELGILPAVDVGKSVSRVGGKAQRAAYRGVTVDLKLAYAQFEELETFARFGARLDDDTLKIIEHGRRIRACLKQPEFAPVSMAEQIAVLVALTADLFDDINLDNMPAAEQAVRDAAANITDDIVERLESTDKLSKDDKAVILELARQALETFSTDTDLGEPR</sequence>
<accession>A6VWQ6</accession>
<name>ATPA1_MARMS</name>